<evidence type="ECO:0000255" key="1">
    <source>
        <dbReference type="HAMAP-Rule" id="MF_00001"/>
    </source>
</evidence>
<organism>
    <name type="scientific">Pelotomaculum thermopropionicum (strain DSM 13744 / JCM 10971 / SI)</name>
    <dbReference type="NCBI Taxonomy" id="370438"/>
    <lineage>
        <taxon>Bacteria</taxon>
        <taxon>Bacillati</taxon>
        <taxon>Bacillota</taxon>
        <taxon>Clostridia</taxon>
        <taxon>Eubacteriales</taxon>
        <taxon>Desulfotomaculaceae</taxon>
        <taxon>Pelotomaculum</taxon>
    </lineage>
</organism>
<name>PYRB_PELTS</name>
<feature type="chain" id="PRO_1000073735" description="Aspartate carbamoyltransferase catalytic subunit">
    <location>
        <begin position="1"/>
        <end position="309"/>
    </location>
</feature>
<feature type="binding site" evidence="1">
    <location>
        <position position="58"/>
    </location>
    <ligand>
        <name>carbamoyl phosphate</name>
        <dbReference type="ChEBI" id="CHEBI:58228"/>
    </ligand>
</feature>
<feature type="binding site" evidence="1">
    <location>
        <position position="59"/>
    </location>
    <ligand>
        <name>carbamoyl phosphate</name>
        <dbReference type="ChEBI" id="CHEBI:58228"/>
    </ligand>
</feature>
<feature type="binding site" evidence="1">
    <location>
        <position position="86"/>
    </location>
    <ligand>
        <name>L-aspartate</name>
        <dbReference type="ChEBI" id="CHEBI:29991"/>
    </ligand>
</feature>
<feature type="binding site" evidence="1">
    <location>
        <position position="108"/>
    </location>
    <ligand>
        <name>carbamoyl phosphate</name>
        <dbReference type="ChEBI" id="CHEBI:58228"/>
    </ligand>
</feature>
<feature type="binding site" evidence="1">
    <location>
        <position position="136"/>
    </location>
    <ligand>
        <name>carbamoyl phosphate</name>
        <dbReference type="ChEBI" id="CHEBI:58228"/>
    </ligand>
</feature>
<feature type="binding site" evidence="1">
    <location>
        <position position="139"/>
    </location>
    <ligand>
        <name>carbamoyl phosphate</name>
        <dbReference type="ChEBI" id="CHEBI:58228"/>
    </ligand>
</feature>
<feature type="binding site" evidence="1">
    <location>
        <position position="169"/>
    </location>
    <ligand>
        <name>L-aspartate</name>
        <dbReference type="ChEBI" id="CHEBI:29991"/>
    </ligand>
</feature>
<feature type="binding site" evidence="1">
    <location>
        <position position="223"/>
    </location>
    <ligand>
        <name>L-aspartate</name>
        <dbReference type="ChEBI" id="CHEBI:29991"/>
    </ligand>
</feature>
<feature type="binding site" evidence="1">
    <location>
        <position position="264"/>
    </location>
    <ligand>
        <name>carbamoyl phosphate</name>
        <dbReference type="ChEBI" id="CHEBI:58228"/>
    </ligand>
</feature>
<feature type="binding site" evidence="1">
    <location>
        <position position="265"/>
    </location>
    <ligand>
        <name>carbamoyl phosphate</name>
        <dbReference type="ChEBI" id="CHEBI:58228"/>
    </ligand>
</feature>
<proteinExistence type="inferred from homology"/>
<keyword id="KW-0665">Pyrimidine biosynthesis</keyword>
<keyword id="KW-1185">Reference proteome</keyword>
<keyword id="KW-0808">Transferase</keyword>
<sequence>MGLIGKDLIGLRDMPAERIKLILDTAVPMKEIIRRQIKKVPTLRGRTVVTVFYEASTRTRTSFELAAKYLSADTVTIAAAASSVSKGESLKDTARTIAAMGADAVVLRHPMAGAAELLARTVDAAVINAGDGAHEHPSQALLDLFTVREKKGRLEGLKVAIIGDIMHSRVARSDIWGFTRMGAEVRLAGPATLLPPGLEKMGARVCSSVEEALMDADVVIVLRIQLERQQQGLFPGLREYARLFGINRERLRLAAPGAVVMHPGPMNRGIEISPEVADGLQSAINEQVNNGVAVRMALLYLLTGGGCRK</sequence>
<comment type="function">
    <text evidence="1">Catalyzes the condensation of carbamoyl phosphate and aspartate to form carbamoyl aspartate and inorganic phosphate, the committed step in the de novo pyrimidine nucleotide biosynthesis pathway.</text>
</comment>
<comment type="catalytic activity">
    <reaction evidence="1">
        <text>carbamoyl phosphate + L-aspartate = N-carbamoyl-L-aspartate + phosphate + H(+)</text>
        <dbReference type="Rhea" id="RHEA:20013"/>
        <dbReference type="ChEBI" id="CHEBI:15378"/>
        <dbReference type="ChEBI" id="CHEBI:29991"/>
        <dbReference type="ChEBI" id="CHEBI:32814"/>
        <dbReference type="ChEBI" id="CHEBI:43474"/>
        <dbReference type="ChEBI" id="CHEBI:58228"/>
        <dbReference type="EC" id="2.1.3.2"/>
    </reaction>
</comment>
<comment type="pathway">
    <text evidence="1">Pyrimidine metabolism; UMP biosynthesis via de novo pathway; (S)-dihydroorotate from bicarbonate: step 2/3.</text>
</comment>
<comment type="subunit">
    <text evidence="1">Heterododecamer (2C3:3R2) of six catalytic PyrB chains organized as two trimers (C3), and six regulatory PyrI chains organized as three dimers (R2).</text>
</comment>
<comment type="similarity">
    <text evidence="1">Belongs to the aspartate/ornithine carbamoyltransferase superfamily. ATCase family.</text>
</comment>
<dbReference type="EC" id="2.1.3.2" evidence="1"/>
<dbReference type="EMBL" id="AP009389">
    <property type="protein sequence ID" value="BAF59993.1"/>
    <property type="molecule type" value="Genomic_DNA"/>
</dbReference>
<dbReference type="SMR" id="A5D1A5"/>
<dbReference type="STRING" id="370438.PTH_1812"/>
<dbReference type="KEGG" id="pth:PTH_1812"/>
<dbReference type="eggNOG" id="COG0540">
    <property type="taxonomic scope" value="Bacteria"/>
</dbReference>
<dbReference type="HOGENOM" id="CLU_043846_2_0_9"/>
<dbReference type="UniPathway" id="UPA00070">
    <property type="reaction ID" value="UER00116"/>
</dbReference>
<dbReference type="Proteomes" id="UP000006556">
    <property type="component" value="Chromosome"/>
</dbReference>
<dbReference type="GO" id="GO:0005829">
    <property type="term" value="C:cytosol"/>
    <property type="evidence" value="ECO:0007669"/>
    <property type="project" value="TreeGrafter"/>
</dbReference>
<dbReference type="GO" id="GO:0016597">
    <property type="term" value="F:amino acid binding"/>
    <property type="evidence" value="ECO:0007669"/>
    <property type="project" value="InterPro"/>
</dbReference>
<dbReference type="GO" id="GO:0004070">
    <property type="term" value="F:aspartate carbamoyltransferase activity"/>
    <property type="evidence" value="ECO:0007669"/>
    <property type="project" value="UniProtKB-UniRule"/>
</dbReference>
<dbReference type="GO" id="GO:0006207">
    <property type="term" value="P:'de novo' pyrimidine nucleobase biosynthetic process"/>
    <property type="evidence" value="ECO:0007669"/>
    <property type="project" value="InterPro"/>
</dbReference>
<dbReference type="GO" id="GO:0044205">
    <property type="term" value="P:'de novo' UMP biosynthetic process"/>
    <property type="evidence" value="ECO:0007669"/>
    <property type="project" value="UniProtKB-UniRule"/>
</dbReference>
<dbReference type="GO" id="GO:0006520">
    <property type="term" value="P:amino acid metabolic process"/>
    <property type="evidence" value="ECO:0007669"/>
    <property type="project" value="InterPro"/>
</dbReference>
<dbReference type="FunFam" id="3.40.50.1370:FF:000007">
    <property type="entry name" value="Aspartate carbamoyltransferase"/>
    <property type="match status" value="1"/>
</dbReference>
<dbReference type="Gene3D" id="3.40.50.1370">
    <property type="entry name" value="Aspartate/ornithine carbamoyltransferase"/>
    <property type="match status" value="2"/>
</dbReference>
<dbReference type="HAMAP" id="MF_00001">
    <property type="entry name" value="Asp_carb_tr"/>
    <property type="match status" value="1"/>
</dbReference>
<dbReference type="InterPro" id="IPR006132">
    <property type="entry name" value="Asp/Orn_carbamoyltranf_P-bd"/>
</dbReference>
<dbReference type="InterPro" id="IPR006130">
    <property type="entry name" value="Asp/Orn_carbamoylTrfase"/>
</dbReference>
<dbReference type="InterPro" id="IPR036901">
    <property type="entry name" value="Asp/Orn_carbamoylTrfase_sf"/>
</dbReference>
<dbReference type="InterPro" id="IPR002082">
    <property type="entry name" value="Asp_carbamoyltransf"/>
</dbReference>
<dbReference type="InterPro" id="IPR006131">
    <property type="entry name" value="Asp_carbamoyltransf_Asp/Orn-bd"/>
</dbReference>
<dbReference type="NCBIfam" id="TIGR00670">
    <property type="entry name" value="asp_carb_tr"/>
    <property type="match status" value="1"/>
</dbReference>
<dbReference type="NCBIfam" id="NF002032">
    <property type="entry name" value="PRK00856.1"/>
    <property type="match status" value="1"/>
</dbReference>
<dbReference type="PANTHER" id="PTHR45753:SF6">
    <property type="entry name" value="ASPARTATE CARBAMOYLTRANSFERASE"/>
    <property type="match status" value="1"/>
</dbReference>
<dbReference type="PANTHER" id="PTHR45753">
    <property type="entry name" value="ORNITHINE CARBAMOYLTRANSFERASE, MITOCHONDRIAL"/>
    <property type="match status" value="1"/>
</dbReference>
<dbReference type="Pfam" id="PF00185">
    <property type="entry name" value="OTCace"/>
    <property type="match status" value="1"/>
</dbReference>
<dbReference type="Pfam" id="PF02729">
    <property type="entry name" value="OTCace_N"/>
    <property type="match status" value="1"/>
</dbReference>
<dbReference type="PRINTS" id="PR00100">
    <property type="entry name" value="AOTCASE"/>
</dbReference>
<dbReference type="PRINTS" id="PR00101">
    <property type="entry name" value="ATCASE"/>
</dbReference>
<dbReference type="SUPFAM" id="SSF53671">
    <property type="entry name" value="Aspartate/ornithine carbamoyltransferase"/>
    <property type="match status" value="1"/>
</dbReference>
<dbReference type="PROSITE" id="PS00097">
    <property type="entry name" value="CARBAMOYLTRANSFERASE"/>
    <property type="match status" value="1"/>
</dbReference>
<gene>
    <name evidence="1" type="primary">pyrB</name>
    <name type="ordered locus">PTH_1812</name>
</gene>
<protein>
    <recommendedName>
        <fullName evidence="1">Aspartate carbamoyltransferase catalytic subunit</fullName>
        <ecNumber evidence="1">2.1.3.2</ecNumber>
    </recommendedName>
    <alternativeName>
        <fullName evidence="1">Aspartate transcarbamylase</fullName>
        <shortName evidence="1">ATCase</shortName>
    </alternativeName>
</protein>
<accession>A5D1A5</accession>
<reference key="1">
    <citation type="journal article" date="2008" name="Genome Res.">
        <title>The genome of Pelotomaculum thermopropionicum reveals niche-associated evolution in anaerobic microbiota.</title>
        <authorList>
            <person name="Kosaka T."/>
            <person name="Kato S."/>
            <person name="Shimoyama T."/>
            <person name="Ishii S."/>
            <person name="Abe T."/>
            <person name="Watanabe K."/>
        </authorList>
    </citation>
    <scope>NUCLEOTIDE SEQUENCE [LARGE SCALE GENOMIC DNA]</scope>
    <source>
        <strain>DSM 13744 / JCM 10971 / SI</strain>
    </source>
</reference>